<evidence type="ECO:0000250" key="1"/>
<evidence type="ECO:0000255" key="2"/>
<evidence type="ECO:0000255" key="3">
    <source>
        <dbReference type="PROSITE-ProRule" id="PRU10001"/>
    </source>
</evidence>
<evidence type="ECO:0000305" key="4"/>
<accession>Q949M3</accession>
<dbReference type="EC" id="1.1.1.100"/>
<dbReference type="EMBL" id="AJ243085">
    <property type="protein sequence ID" value="CAC41364.1"/>
    <property type="molecule type" value="mRNA"/>
</dbReference>
<dbReference type="RefSeq" id="NP_001303056.1">
    <property type="nucleotide sequence ID" value="NM_001316127.1"/>
</dbReference>
<dbReference type="SMR" id="Q949M3"/>
<dbReference type="EnsemblPlants" id="CDX84941">
    <property type="protein sequence ID" value="CDX84941"/>
    <property type="gene ID" value="GSBRNA2T00142300001"/>
</dbReference>
<dbReference type="GeneID" id="106401718"/>
<dbReference type="Gramene" id="CDX84941">
    <property type="protein sequence ID" value="CDX84941"/>
    <property type="gene ID" value="GSBRNA2T00142300001"/>
</dbReference>
<dbReference type="KEGG" id="bna:106401718"/>
<dbReference type="OMA" id="TDIEHGW"/>
<dbReference type="OrthoDB" id="1393670at2759"/>
<dbReference type="BRENDA" id="1.1.1.100">
    <property type="organism ID" value="944"/>
</dbReference>
<dbReference type="UniPathway" id="UPA00094"/>
<dbReference type="GO" id="GO:0009507">
    <property type="term" value="C:chloroplast"/>
    <property type="evidence" value="ECO:0007669"/>
    <property type="project" value="UniProtKB-SubCell"/>
</dbReference>
<dbReference type="GO" id="GO:0004316">
    <property type="term" value="F:3-oxoacyl-[acyl-carrier-protein] reductase (NADPH) activity"/>
    <property type="evidence" value="ECO:0007669"/>
    <property type="project" value="UniProtKB-EC"/>
</dbReference>
<dbReference type="GO" id="GO:0051287">
    <property type="term" value="F:NAD binding"/>
    <property type="evidence" value="ECO:0007669"/>
    <property type="project" value="InterPro"/>
</dbReference>
<dbReference type="GO" id="GO:0006633">
    <property type="term" value="P:fatty acid biosynthetic process"/>
    <property type="evidence" value="ECO:0007669"/>
    <property type="project" value="UniProtKB-UniPathway"/>
</dbReference>
<dbReference type="CDD" id="cd05333">
    <property type="entry name" value="BKR_SDR_c"/>
    <property type="match status" value="1"/>
</dbReference>
<dbReference type="FunFam" id="3.40.50.720:FF:000194">
    <property type="entry name" value="3-oxoacyl-[acyl-carrier-protein] reductase, chloroplastic"/>
    <property type="match status" value="1"/>
</dbReference>
<dbReference type="Gene3D" id="3.40.50.720">
    <property type="entry name" value="NAD(P)-binding Rossmann-like Domain"/>
    <property type="match status" value="1"/>
</dbReference>
<dbReference type="InterPro" id="IPR011284">
    <property type="entry name" value="3oxo_ACP_reduc"/>
</dbReference>
<dbReference type="InterPro" id="IPR036291">
    <property type="entry name" value="NAD(P)-bd_dom_sf"/>
</dbReference>
<dbReference type="InterPro" id="IPR020904">
    <property type="entry name" value="Sc_DH/Rdtase_CS"/>
</dbReference>
<dbReference type="InterPro" id="IPR050259">
    <property type="entry name" value="SDR"/>
</dbReference>
<dbReference type="InterPro" id="IPR002347">
    <property type="entry name" value="SDR_fam"/>
</dbReference>
<dbReference type="NCBIfam" id="TIGR01830">
    <property type="entry name" value="3oxo_ACP_reduc"/>
    <property type="match status" value="1"/>
</dbReference>
<dbReference type="NCBIfam" id="NF005559">
    <property type="entry name" value="PRK07231.1"/>
    <property type="match status" value="1"/>
</dbReference>
<dbReference type="NCBIfam" id="NF009466">
    <property type="entry name" value="PRK12826.1-2"/>
    <property type="match status" value="1"/>
</dbReference>
<dbReference type="PANTHER" id="PTHR42879">
    <property type="entry name" value="3-OXOACYL-(ACYL-CARRIER-PROTEIN) REDUCTASE"/>
    <property type="match status" value="1"/>
</dbReference>
<dbReference type="PANTHER" id="PTHR42879:SF2">
    <property type="entry name" value="3-OXOACYL-[ACYL-CARRIER-PROTEIN] REDUCTASE FABG"/>
    <property type="match status" value="1"/>
</dbReference>
<dbReference type="Pfam" id="PF00106">
    <property type="entry name" value="adh_short"/>
    <property type="match status" value="1"/>
</dbReference>
<dbReference type="PRINTS" id="PR00081">
    <property type="entry name" value="GDHRDH"/>
</dbReference>
<dbReference type="PRINTS" id="PR00080">
    <property type="entry name" value="SDRFAMILY"/>
</dbReference>
<dbReference type="SMART" id="SM00822">
    <property type="entry name" value="PKS_KR"/>
    <property type="match status" value="1"/>
</dbReference>
<dbReference type="SUPFAM" id="SSF51735">
    <property type="entry name" value="NAD(P)-binding Rossmann-fold domains"/>
    <property type="match status" value="1"/>
</dbReference>
<dbReference type="PROSITE" id="PS00061">
    <property type="entry name" value="ADH_SHORT"/>
    <property type="match status" value="1"/>
</dbReference>
<sequence>MATTVAATKLTSLKAVKKLGFREIRQVRQWTPLQSSMPHFGSRQSFATSTVVKAQATAVEQSTGEAVPKVESPVVVVTGASRGIGKAIALSLGKAGCKVLVNYARSAKEAEEVSKQIEAYGGQAITFGGDVSKEADVEAMMKTAIDAWGTIDVVVNNAGITRDTLLIRMKKSQWDEVIDLNLTGVFLCTQAATKIMMKKRKGRIINIASVVGLIGNIGQANYAAAKAGVIGFSKTAAREGASRNINVNVVCPGFIASDMTAKLGEDMEKKILGTIPLGRYGQPEDVAGLVEFLALSPAASYITGQAFTIDGGIAI</sequence>
<proteinExistence type="evidence at transcript level"/>
<reference key="1">
    <citation type="submission" date="2001-06" db="EMBL/GenBank/DDBJ databases">
        <authorList>
            <person name="McDonald F.S."/>
            <person name="White A.J."/>
            <person name="Elborough K.M."/>
            <person name="Slabas A.R."/>
        </authorList>
    </citation>
    <scope>NUCLEOTIDE SEQUENCE [MRNA]</scope>
    <source>
        <strain>cv. Jet neuf</strain>
        <tissue>Embryo</tissue>
    </source>
</reference>
<feature type="transit peptide" description="Chloroplast" evidence="2">
    <location>
        <begin position="1"/>
        <end position="55"/>
    </location>
</feature>
<feature type="chain" id="PRO_0000031979" description="3-oxoacyl-[acyl-carrier-protein] reductase 3, chloroplastic">
    <location>
        <begin position="56"/>
        <end position="315"/>
    </location>
</feature>
<feature type="active site" description="Proton acceptor" evidence="3">
    <location>
        <position position="222"/>
    </location>
</feature>
<feature type="binding site" evidence="1">
    <location>
        <begin position="77"/>
        <end position="101"/>
    </location>
    <ligand>
        <name>NADP(+)</name>
        <dbReference type="ChEBI" id="CHEBI:58349"/>
    </ligand>
</feature>
<feature type="binding site" evidence="1">
    <location>
        <position position="209"/>
    </location>
    <ligand>
        <name>substrate</name>
    </ligand>
</feature>
<gene>
    <name type="primary">bkr3</name>
</gene>
<keyword id="KW-0150">Chloroplast</keyword>
<keyword id="KW-0275">Fatty acid biosynthesis</keyword>
<keyword id="KW-0276">Fatty acid metabolism</keyword>
<keyword id="KW-0444">Lipid biosynthesis</keyword>
<keyword id="KW-0443">Lipid metabolism</keyword>
<keyword id="KW-0521">NADP</keyword>
<keyword id="KW-0560">Oxidoreductase</keyword>
<keyword id="KW-0934">Plastid</keyword>
<keyword id="KW-0809">Transit peptide</keyword>
<organism>
    <name type="scientific">Brassica napus</name>
    <name type="common">Rape</name>
    <dbReference type="NCBI Taxonomy" id="3708"/>
    <lineage>
        <taxon>Eukaryota</taxon>
        <taxon>Viridiplantae</taxon>
        <taxon>Streptophyta</taxon>
        <taxon>Embryophyta</taxon>
        <taxon>Tracheophyta</taxon>
        <taxon>Spermatophyta</taxon>
        <taxon>Magnoliopsida</taxon>
        <taxon>eudicotyledons</taxon>
        <taxon>Gunneridae</taxon>
        <taxon>Pentapetalae</taxon>
        <taxon>rosids</taxon>
        <taxon>malvids</taxon>
        <taxon>Brassicales</taxon>
        <taxon>Brassicaceae</taxon>
        <taxon>Brassiceae</taxon>
        <taxon>Brassica</taxon>
    </lineage>
</organism>
<protein>
    <recommendedName>
        <fullName>3-oxoacyl-[acyl-carrier-protein] reductase 3, chloroplastic</fullName>
        <ecNumber>1.1.1.100</ecNumber>
    </recommendedName>
    <alternativeName>
        <fullName>3-ketoacyl-acyl carrier protein reductase 3</fullName>
    </alternativeName>
</protein>
<name>FABG3_BRANA</name>
<comment type="catalytic activity">
    <reaction>
        <text>a (3R)-hydroxyacyl-[ACP] + NADP(+) = a 3-oxoacyl-[ACP] + NADPH + H(+)</text>
        <dbReference type="Rhea" id="RHEA:17397"/>
        <dbReference type="Rhea" id="RHEA-COMP:9916"/>
        <dbReference type="Rhea" id="RHEA-COMP:9945"/>
        <dbReference type="ChEBI" id="CHEBI:15378"/>
        <dbReference type="ChEBI" id="CHEBI:57783"/>
        <dbReference type="ChEBI" id="CHEBI:58349"/>
        <dbReference type="ChEBI" id="CHEBI:78776"/>
        <dbReference type="ChEBI" id="CHEBI:78827"/>
        <dbReference type="EC" id="1.1.1.100"/>
    </reaction>
</comment>
<comment type="pathway">
    <text>Lipid metabolism; fatty acid biosynthesis.</text>
</comment>
<comment type="subunit">
    <text evidence="1">Homotetramer.</text>
</comment>
<comment type="subcellular location">
    <subcellularLocation>
        <location evidence="1">Plastid</location>
        <location evidence="1">Chloroplast</location>
    </subcellularLocation>
    <subcellularLocation>
        <location evidence="1">Plastid</location>
    </subcellularLocation>
    <text evidence="1">And non-photosynthetic plastids.</text>
</comment>
<comment type="similarity">
    <text evidence="4">Belongs to the short-chain dehydrogenases/reductases (SDR) family.</text>
</comment>